<keyword id="KW-0963">Cytoplasm</keyword>
<keyword id="KW-1185">Reference proteome</keyword>
<keyword id="KW-0687">Ribonucleoprotein</keyword>
<keyword id="KW-0689">Ribosomal protein</keyword>
<organism>
    <name type="scientific">Plasmodium knowlesi (strain H)</name>
    <dbReference type="NCBI Taxonomy" id="5851"/>
    <lineage>
        <taxon>Eukaryota</taxon>
        <taxon>Sar</taxon>
        <taxon>Alveolata</taxon>
        <taxon>Apicomplexa</taxon>
        <taxon>Aconoidasida</taxon>
        <taxon>Haemosporida</taxon>
        <taxon>Plasmodiidae</taxon>
        <taxon>Plasmodium</taxon>
        <taxon>Plasmodium (Plasmodium)</taxon>
    </lineage>
</organism>
<accession>B3L3W7</accession>
<evidence type="ECO:0000255" key="1">
    <source>
        <dbReference type="HAMAP-Rule" id="MF_03122"/>
    </source>
</evidence>
<evidence type="ECO:0000305" key="2"/>
<reference key="1">
    <citation type="journal article" date="2008" name="Nature">
        <title>The genome of the simian and human malaria parasite Plasmodium knowlesi.</title>
        <authorList>
            <person name="Pain A."/>
            <person name="Boehme U."/>
            <person name="Berry A.E."/>
            <person name="Mungall K."/>
            <person name="Finn R.D."/>
            <person name="Jackson A.P."/>
            <person name="Mourier T."/>
            <person name="Mistry J."/>
            <person name="Pasini E.M."/>
            <person name="Aslett M.A."/>
            <person name="Balasubrammaniam S."/>
            <person name="Borgwardt K."/>
            <person name="Brooks K."/>
            <person name="Carret C."/>
            <person name="Carver T.J."/>
            <person name="Cherevach I."/>
            <person name="Chillingworth T."/>
            <person name="Clark T.G."/>
            <person name="Galinski M.R."/>
            <person name="Hall N."/>
            <person name="Harper D."/>
            <person name="Harris D."/>
            <person name="Hauser H."/>
            <person name="Ivens A."/>
            <person name="Janssen C.S."/>
            <person name="Keane T."/>
            <person name="Larke N."/>
            <person name="Lapp S."/>
            <person name="Marti M."/>
            <person name="Moule S."/>
            <person name="Meyer I.M."/>
            <person name="Ormond D."/>
            <person name="Peters N."/>
            <person name="Sanders M."/>
            <person name="Sanders S."/>
            <person name="Sargeant T.J."/>
            <person name="Simmonds M."/>
            <person name="Smith F."/>
            <person name="Squares R."/>
            <person name="Thurston S."/>
            <person name="Tivey A.R."/>
            <person name="Walker D."/>
            <person name="White B."/>
            <person name="Zuiderwijk E."/>
            <person name="Churcher C."/>
            <person name="Quail M.A."/>
            <person name="Cowman A.F."/>
            <person name="Turner C.M.R."/>
            <person name="Rajandream M.A."/>
            <person name="Kocken C.H.M."/>
            <person name="Thomas A.W."/>
            <person name="Newbold C.I."/>
            <person name="Barrell B.G."/>
            <person name="Berriman M."/>
        </authorList>
    </citation>
    <scope>NUCLEOTIDE SEQUENCE [LARGE SCALE GENOMIC DNA]</scope>
    <source>
        <strain>H</strain>
    </source>
</reference>
<protein>
    <recommendedName>
        <fullName evidence="1">Small ribosomal subunit protein eS1</fullName>
    </recommendedName>
    <alternativeName>
        <fullName evidence="2">40S ribosomal protein S3a</fullName>
    </alternativeName>
</protein>
<gene>
    <name type="ORF">PKH_081740</name>
</gene>
<sequence>MAVGKNKRTSKGKKGGKKKVTDVFTKKEWYDLKAPKMFLVRNFGKTLVTKTIGKKLATDGLKGRIYEVNLADLNNDEDQAHKKIKLCCDHIINKDCYTDFCGLSITRDKLCSLIRKGYTLIEGYTDVKTIDNYQLRMFCIAFTKKRPNQTKTTCYAQTSQIKKIRKKMVDIMNAEASKVLLKDLVKKFIPESIGKEVEKQCKKIYPLQNVLIRKVKILKRPKLDISKLMELHTDSKEDAGKNVKSLPESKEATNILSAELKH</sequence>
<feature type="initiator methionine" description="Removed" evidence="1">
    <location>
        <position position="1"/>
    </location>
</feature>
<feature type="chain" id="PRO_0000389337" description="Small ribosomal subunit protein eS1">
    <location>
        <begin position="2"/>
        <end position="262"/>
    </location>
</feature>
<comment type="subunit">
    <text evidence="1">Component of the small ribosomal subunit. Mature ribosomes consist of a small (40S) and a large (60S) subunit. The 40S subunit contains about 33 different proteins and 1 molecule of RNA (18S). The 60S subunit contains about 49 different proteins and 3 molecules of RNA (25S, 5.8S and 5S).</text>
</comment>
<comment type="subcellular location">
    <subcellularLocation>
        <location evidence="1">Cytoplasm</location>
    </subcellularLocation>
</comment>
<comment type="similarity">
    <text evidence="1">Belongs to the eukaryotic ribosomal protein eS1 family.</text>
</comment>
<dbReference type="EMBL" id="AM910990">
    <property type="protein sequence ID" value="CAQ39588.1"/>
    <property type="molecule type" value="Genomic_DNA"/>
</dbReference>
<dbReference type="RefSeq" id="XP_002258815.1">
    <property type="nucleotide sequence ID" value="XM_002258779.1"/>
</dbReference>
<dbReference type="SMR" id="B3L3W7"/>
<dbReference type="FunCoup" id="B3L3W7">
    <property type="interactions" value="407"/>
</dbReference>
<dbReference type="STRING" id="5851.B3L3W7"/>
<dbReference type="EnsemblProtists" id="CAQ39588">
    <property type="protein sequence ID" value="CAQ39588"/>
    <property type="gene ID" value="PKH_081740"/>
</dbReference>
<dbReference type="GeneID" id="7320248"/>
<dbReference type="KEGG" id="pkn:PKNH_0817500"/>
<dbReference type="VEuPathDB" id="PlasmoDB:PKNH_0817500"/>
<dbReference type="HOGENOM" id="CLU_062507_0_1_1"/>
<dbReference type="InParanoid" id="B3L3W7"/>
<dbReference type="OMA" id="TRFKGHE"/>
<dbReference type="OrthoDB" id="9834376at2759"/>
<dbReference type="PhylomeDB" id="B3L3W7"/>
<dbReference type="Proteomes" id="UP000031513">
    <property type="component" value="Chromosome 8"/>
</dbReference>
<dbReference type="GO" id="GO:0022627">
    <property type="term" value="C:cytosolic small ribosomal subunit"/>
    <property type="evidence" value="ECO:0007669"/>
    <property type="project" value="UniProtKB-UniRule"/>
</dbReference>
<dbReference type="GO" id="GO:0003735">
    <property type="term" value="F:structural constituent of ribosome"/>
    <property type="evidence" value="ECO:0007669"/>
    <property type="project" value="UniProtKB-UniRule"/>
</dbReference>
<dbReference type="GO" id="GO:0006412">
    <property type="term" value="P:translation"/>
    <property type="evidence" value="ECO:0007669"/>
    <property type="project" value="UniProtKB-UniRule"/>
</dbReference>
<dbReference type="HAMAP" id="MF_03122">
    <property type="entry name" value="Ribosomal_eS1_euk"/>
    <property type="match status" value="1"/>
</dbReference>
<dbReference type="InterPro" id="IPR001593">
    <property type="entry name" value="Ribosomal_eS1"/>
</dbReference>
<dbReference type="InterPro" id="IPR027500">
    <property type="entry name" value="Ribosomal_eS1_euk"/>
</dbReference>
<dbReference type="PANTHER" id="PTHR11830">
    <property type="entry name" value="40S RIBOSOMAL PROTEIN S3A"/>
    <property type="match status" value="1"/>
</dbReference>
<dbReference type="Pfam" id="PF01015">
    <property type="entry name" value="Ribosomal_S3Ae"/>
    <property type="match status" value="1"/>
</dbReference>
<dbReference type="SMART" id="SM01397">
    <property type="entry name" value="Ribosomal_S3Ae"/>
    <property type="match status" value="1"/>
</dbReference>
<proteinExistence type="inferred from homology"/>
<name>RS3A_PLAKH</name>